<reference key="1">
    <citation type="submission" date="2008-04" db="EMBL/GenBank/DDBJ databases">
        <title>Complete sequence of chromosome of Natranaerobius thermophilus JW/NM-WN-LF.</title>
        <authorList>
            <consortium name="US DOE Joint Genome Institute"/>
            <person name="Copeland A."/>
            <person name="Lucas S."/>
            <person name="Lapidus A."/>
            <person name="Glavina del Rio T."/>
            <person name="Dalin E."/>
            <person name="Tice H."/>
            <person name="Bruce D."/>
            <person name="Goodwin L."/>
            <person name="Pitluck S."/>
            <person name="Chertkov O."/>
            <person name="Brettin T."/>
            <person name="Detter J.C."/>
            <person name="Han C."/>
            <person name="Kuske C.R."/>
            <person name="Schmutz J."/>
            <person name="Larimer F."/>
            <person name="Land M."/>
            <person name="Hauser L."/>
            <person name="Kyrpides N."/>
            <person name="Lykidis A."/>
            <person name="Mesbah N.M."/>
            <person name="Wiegel J."/>
        </authorList>
    </citation>
    <scope>NUCLEOTIDE SEQUENCE [LARGE SCALE GENOMIC DNA]</scope>
    <source>
        <strain>ATCC BAA-1301 / DSM 18059 / JW/NM-WN-LF</strain>
    </source>
</reference>
<sequence length="351" mass="39632">MINHKQSLKDLTLNELQEYFSRKGWQQFRAKQIFDWMYIQQVDSIEVMSNIPKKLRQELMENCTINDLELDSNNIYTSPTDGTIKFLSVLKDGIGVETTIMKYDYGNTVCISSQAGCNMNCVFCASTTGGKERDLSPGEMIDQVLMANKVLPGSESINNIVVMGSGEPLENYQHLIKFLKIVNDGKGLNIGMRHITVSTCGLVPEIYNLAEEELQLNLAISLHAPNDELRNKLIPLNKIYPIHELLEACQVYFQKTGRRITFEYVLIKDFNDSIDLAKELSETLTALKMPVHVNLIPFNPVEETKFTAPPSSRISDFKNNLQSNNIGVTVRKERGVDVDGACGQLRSKVMR</sequence>
<comment type="function">
    <text evidence="1">Specifically methylates position 2 of adenine 2503 in 23S rRNA and position 2 of adenine 37 in tRNAs.</text>
</comment>
<comment type="catalytic activity">
    <reaction evidence="1">
        <text>adenosine(2503) in 23S rRNA + 2 reduced [2Fe-2S]-[ferredoxin] + 2 S-adenosyl-L-methionine = 2-methyladenosine(2503) in 23S rRNA + 5'-deoxyadenosine + L-methionine + 2 oxidized [2Fe-2S]-[ferredoxin] + S-adenosyl-L-homocysteine</text>
        <dbReference type="Rhea" id="RHEA:42916"/>
        <dbReference type="Rhea" id="RHEA-COMP:10000"/>
        <dbReference type="Rhea" id="RHEA-COMP:10001"/>
        <dbReference type="Rhea" id="RHEA-COMP:10152"/>
        <dbReference type="Rhea" id="RHEA-COMP:10282"/>
        <dbReference type="ChEBI" id="CHEBI:17319"/>
        <dbReference type="ChEBI" id="CHEBI:33737"/>
        <dbReference type="ChEBI" id="CHEBI:33738"/>
        <dbReference type="ChEBI" id="CHEBI:57844"/>
        <dbReference type="ChEBI" id="CHEBI:57856"/>
        <dbReference type="ChEBI" id="CHEBI:59789"/>
        <dbReference type="ChEBI" id="CHEBI:74411"/>
        <dbReference type="ChEBI" id="CHEBI:74497"/>
        <dbReference type="EC" id="2.1.1.192"/>
    </reaction>
</comment>
<comment type="catalytic activity">
    <reaction evidence="1">
        <text>adenosine(37) in tRNA + 2 reduced [2Fe-2S]-[ferredoxin] + 2 S-adenosyl-L-methionine = 2-methyladenosine(37) in tRNA + 5'-deoxyadenosine + L-methionine + 2 oxidized [2Fe-2S]-[ferredoxin] + S-adenosyl-L-homocysteine</text>
        <dbReference type="Rhea" id="RHEA:43332"/>
        <dbReference type="Rhea" id="RHEA-COMP:10000"/>
        <dbReference type="Rhea" id="RHEA-COMP:10001"/>
        <dbReference type="Rhea" id="RHEA-COMP:10162"/>
        <dbReference type="Rhea" id="RHEA-COMP:10485"/>
        <dbReference type="ChEBI" id="CHEBI:17319"/>
        <dbReference type="ChEBI" id="CHEBI:33737"/>
        <dbReference type="ChEBI" id="CHEBI:33738"/>
        <dbReference type="ChEBI" id="CHEBI:57844"/>
        <dbReference type="ChEBI" id="CHEBI:57856"/>
        <dbReference type="ChEBI" id="CHEBI:59789"/>
        <dbReference type="ChEBI" id="CHEBI:74411"/>
        <dbReference type="ChEBI" id="CHEBI:74497"/>
        <dbReference type="EC" id="2.1.1.192"/>
    </reaction>
</comment>
<comment type="cofactor">
    <cofactor evidence="1">
        <name>[4Fe-4S] cluster</name>
        <dbReference type="ChEBI" id="CHEBI:49883"/>
    </cofactor>
    <text evidence="1">Binds 1 [4Fe-4S] cluster. The cluster is coordinated with 3 cysteines and an exchangeable S-adenosyl-L-methionine.</text>
</comment>
<comment type="subcellular location">
    <subcellularLocation>
        <location evidence="1">Cytoplasm</location>
    </subcellularLocation>
</comment>
<comment type="miscellaneous">
    <text evidence="1">Reaction proceeds by a ping-pong mechanism involving intermediate methylation of a conserved cysteine residue.</text>
</comment>
<comment type="similarity">
    <text evidence="1">Belongs to the radical SAM superfamily. RlmN family.</text>
</comment>
<keyword id="KW-0004">4Fe-4S</keyword>
<keyword id="KW-0963">Cytoplasm</keyword>
<keyword id="KW-1015">Disulfide bond</keyword>
<keyword id="KW-0408">Iron</keyword>
<keyword id="KW-0411">Iron-sulfur</keyword>
<keyword id="KW-0479">Metal-binding</keyword>
<keyword id="KW-0489">Methyltransferase</keyword>
<keyword id="KW-1185">Reference proteome</keyword>
<keyword id="KW-0698">rRNA processing</keyword>
<keyword id="KW-0949">S-adenosyl-L-methionine</keyword>
<keyword id="KW-0808">Transferase</keyword>
<keyword id="KW-0819">tRNA processing</keyword>
<organism>
    <name type="scientific">Natranaerobius thermophilus (strain ATCC BAA-1301 / DSM 18059 / JW/NM-WN-LF)</name>
    <dbReference type="NCBI Taxonomy" id="457570"/>
    <lineage>
        <taxon>Bacteria</taxon>
        <taxon>Bacillati</taxon>
        <taxon>Bacillota</taxon>
        <taxon>Clostridia</taxon>
        <taxon>Natranaerobiales</taxon>
        <taxon>Natranaerobiaceae</taxon>
        <taxon>Natranaerobius</taxon>
    </lineage>
</organism>
<evidence type="ECO:0000255" key="1">
    <source>
        <dbReference type="HAMAP-Rule" id="MF_01849"/>
    </source>
</evidence>
<evidence type="ECO:0000255" key="2">
    <source>
        <dbReference type="PROSITE-ProRule" id="PRU01266"/>
    </source>
</evidence>
<gene>
    <name evidence="1" type="primary">rlmN</name>
    <name type="ordered locus">Nther_1338</name>
</gene>
<protein>
    <recommendedName>
        <fullName evidence="1">Probable dual-specificity RNA methyltransferase RlmN</fullName>
        <ecNumber evidence="1">2.1.1.192</ecNumber>
    </recommendedName>
    <alternativeName>
        <fullName evidence="1">23S rRNA (adenine(2503)-C(2))-methyltransferase</fullName>
    </alternativeName>
    <alternativeName>
        <fullName evidence="1">23S rRNA m2A2503 methyltransferase</fullName>
    </alternativeName>
    <alternativeName>
        <fullName evidence="1">Ribosomal RNA large subunit methyltransferase N</fullName>
    </alternativeName>
    <alternativeName>
        <fullName evidence="1">tRNA (adenine(37)-C(2))-methyltransferase</fullName>
    </alternativeName>
    <alternativeName>
        <fullName evidence="1">tRNA m2A37 methyltransferase</fullName>
    </alternativeName>
</protein>
<proteinExistence type="inferred from homology"/>
<name>RLMN_NATTJ</name>
<dbReference type="EC" id="2.1.1.192" evidence="1"/>
<dbReference type="EMBL" id="CP001034">
    <property type="protein sequence ID" value="ACB84921.1"/>
    <property type="molecule type" value="Genomic_DNA"/>
</dbReference>
<dbReference type="RefSeq" id="WP_012447796.1">
    <property type="nucleotide sequence ID" value="NC_010718.1"/>
</dbReference>
<dbReference type="SMR" id="B2A2K6"/>
<dbReference type="FunCoup" id="B2A2K6">
    <property type="interactions" value="434"/>
</dbReference>
<dbReference type="STRING" id="457570.Nther_1338"/>
<dbReference type="KEGG" id="nth:Nther_1338"/>
<dbReference type="eggNOG" id="COG0820">
    <property type="taxonomic scope" value="Bacteria"/>
</dbReference>
<dbReference type="HOGENOM" id="CLU_029101_0_1_9"/>
<dbReference type="InParanoid" id="B2A2K6"/>
<dbReference type="OrthoDB" id="9793973at2"/>
<dbReference type="Proteomes" id="UP000001683">
    <property type="component" value="Chromosome"/>
</dbReference>
<dbReference type="GO" id="GO:0005737">
    <property type="term" value="C:cytoplasm"/>
    <property type="evidence" value="ECO:0007669"/>
    <property type="project" value="UniProtKB-SubCell"/>
</dbReference>
<dbReference type="GO" id="GO:0051539">
    <property type="term" value="F:4 iron, 4 sulfur cluster binding"/>
    <property type="evidence" value="ECO:0007669"/>
    <property type="project" value="UniProtKB-UniRule"/>
</dbReference>
<dbReference type="GO" id="GO:0046872">
    <property type="term" value="F:metal ion binding"/>
    <property type="evidence" value="ECO:0007669"/>
    <property type="project" value="UniProtKB-KW"/>
</dbReference>
<dbReference type="GO" id="GO:0070040">
    <property type="term" value="F:rRNA (adenine(2503)-C2-)-methyltransferase activity"/>
    <property type="evidence" value="ECO:0007669"/>
    <property type="project" value="UniProtKB-UniRule"/>
</dbReference>
<dbReference type="GO" id="GO:0019843">
    <property type="term" value="F:rRNA binding"/>
    <property type="evidence" value="ECO:0007669"/>
    <property type="project" value="UniProtKB-UniRule"/>
</dbReference>
<dbReference type="GO" id="GO:0002935">
    <property type="term" value="F:tRNA (adenine(37)-C2)-methyltransferase activity"/>
    <property type="evidence" value="ECO:0007669"/>
    <property type="project" value="UniProtKB-UniRule"/>
</dbReference>
<dbReference type="GO" id="GO:0000049">
    <property type="term" value="F:tRNA binding"/>
    <property type="evidence" value="ECO:0007669"/>
    <property type="project" value="UniProtKB-UniRule"/>
</dbReference>
<dbReference type="GO" id="GO:0070475">
    <property type="term" value="P:rRNA base methylation"/>
    <property type="evidence" value="ECO:0007669"/>
    <property type="project" value="UniProtKB-UniRule"/>
</dbReference>
<dbReference type="GO" id="GO:0030488">
    <property type="term" value="P:tRNA methylation"/>
    <property type="evidence" value="ECO:0007669"/>
    <property type="project" value="UniProtKB-UniRule"/>
</dbReference>
<dbReference type="CDD" id="cd01335">
    <property type="entry name" value="Radical_SAM"/>
    <property type="match status" value="1"/>
</dbReference>
<dbReference type="FunFam" id="3.20.20.70:FF:000014">
    <property type="entry name" value="Probable dual-specificity RNA methyltransferase RlmN"/>
    <property type="match status" value="1"/>
</dbReference>
<dbReference type="Gene3D" id="1.10.150.530">
    <property type="match status" value="1"/>
</dbReference>
<dbReference type="Gene3D" id="3.20.20.70">
    <property type="entry name" value="Aldolase class I"/>
    <property type="match status" value="1"/>
</dbReference>
<dbReference type="HAMAP" id="MF_01849">
    <property type="entry name" value="RNA_methyltr_RlmN"/>
    <property type="match status" value="1"/>
</dbReference>
<dbReference type="InterPro" id="IPR013785">
    <property type="entry name" value="Aldolase_TIM"/>
</dbReference>
<dbReference type="InterPro" id="IPR040072">
    <property type="entry name" value="Methyltransferase_A"/>
</dbReference>
<dbReference type="InterPro" id="IPR048641">
    <property type="entry name" value="RlmN_N"/>
</dbReference>
<dbReference type="InterPro" id="IPR027492">
    <property type="entry name" value="RNA_MTrfase_RlmN"/>
</dbReference>
<dbReference type="InterPro" id="IPR004383">
    <property type="entry name" value="rRNA_lsu_MTrfase_RlmN/Cfr"/>
</dbReference>
<dbReference type="InterPro" id="IPR007197">
    <property type="entry name" value="rSAM"/>
</dbReference>
<dbReference type="NCBIfam" id="TIGR00048">
    <property type="entry name" value="rRNA_mod_RlmN"/>
    <property type="match status" value="1"/>
</dbReference>
<dbReference type="PANTHER" id="PTHR30544">
    <property type="entry name" value="23S RRNA METHYLTRANSFERASE"/>
    <property type="match status" value="1"/>
</dbReference>
<dbReference type="PANTHER" id="PTHR30544:SF5">
    <property type="entry name" value="RADICAL SAM CORE DOMAIN-CONTAINING PROTEIN"/>
    <property type="match status" value="1"/>
</dbReference>
<dbReference type="Pfam" id="PF04055">
    <property type="entry name" value="Radical_SAM"/>
    <property type="match status" value="1"/>
</dbReference>
<dbReference type="Pfam" id="PF21016">
    <property type="entry name" value="RlmN_N"/>
    <property type="match status" value="1"/>
</dbReference>
<dbReference type="PIRSF" id="PIRSF006004">
    <property type="entry name" value="CHP00048"/>
    <property type="match status" value="1"/>
</dbReference>
<dbReference type="SFLD" id="SFLDF00275">
    <property type="entry name" value="adenosine_C2_methyltransferase"/>
    <property type="match status" value="1"/>
</dbReference>
<dbReference type="SFLD" id="SFLDS00029">
    <property type="entry name" value="Radical_SAM"/>
    <property type="match status" value="1"/>
</dbReference>
<dbReference type="SUPFAM" id="SSF102114">
    <property type="entry name" value="Radical SAM enzymes"/>
    <property type="match status" value="1"/>
</dbReference>
<dbReference type="PROSITE" id="PS51918">
    <property type="entry name" value="RADICAL_SAM"/>
    <property type="match status" value="1"/>
</dbReference>
<feature type="chain" id="PRO_0000350275" description="Probable dual-specificity RNA methyltransferase RlmN">
    <location>
        <begin position="1"/>
        <end position="351"/>
    </location>
</feature>
<feature type="domain" description="Radical SAM core" evidence="2">
    <location>
        <begin position="103"/>
        <end position="337"/>
    </location>
</feature>
<feature type="active site" description="Proton acceptor" evidence="1">
    <location>
        <position position="97"/>
    </location>
</feature>
<feature type="active site" description="S-methylcysteine intermediate" evidence="1">
    <location>
        <position position="342"/>
    </location>
</feature>
<feature type="binding site" evidence="1">
    <location>
        <position position="117"/>
    </location>
    <ligand>
        <name>[4Fe-4S] cluster</name>
        <dbReference type="ChEBI" id="CHEBI:49883"/>
        <note>4Fe-4S-S-AdoMet</note>
    </ligand>
</feature>
<feature type="binding site" evidence="1">
    <location>
        <position position="121"/>
    </location>
    <ligand>
        <name>[4Fe-4S] cluster</name>
        <dbReference type="ChEBI" id="CHEBI:49883"/>
        <note>4Fe-4S-S-AdoMet</note>
    </ligand>
</feature>
<feature type="binding site" evidence="1">
    <location>
        <position position="124"/>
    </location>
    <ligand>
        <name>[4Fe-4S] cluster</name>
        <dbReference type="ChEBI" id="CHEBI:49883"/>
        <note>4Fe-4S-S-AdoMet</note>
    </ligand>
</feature>
<feature type="binding site" evidence="1">
    <location>
        <begin position="166"/>
        <end position="167"/>
    </location>
    <ligand>
        <name>S-adenosyl-L-methionine</name>
        <dbReference type="ChEBI" id="CHEBI:59789"/>
    </ligand>
</feature>
<feature type="binding site" evidence="1">
    <location>
        <position position="198"/>
    </location>
    <ligand>
        <name>S-adenosyl-L-methionine</name>
        <dbReference type="ChEBI" id="CHEBI:59789"/>
    </ligand>
</feature>
<feature type="binding site" evidence="1">
    <location>
        <begin position="221"/>
        <end position="223"/>
    </location>
    <ligand>
        <name>S-adenosyl-L-methionine</name>
        <dbReference type="ChEBI" id="CHEBI:59789"/>
    </ligand>
</feature>
<feature type="binding site" evidence="1">
    <location>
        <position position="299"/>
    </location>
    <ligand>
        <name>S-adenosyl-L-methionine</name>
        <dbReference type="ChEBI" id="CHEBI:59789"/>
    </ligand>
</feature>
<feature type="disulfide bond" description="(transient)" evidence="1">
    <location>
        <begin position="110"/>
        <end position="342"/>
    </location>
</feature>
<accession>B2A2K6</accession>